<organism>
    <name type="scientific">Homo sapiens</name>
    <name type="common">Human</name>
    <dbReference type="NCBI Taxonomy" id="9606"/>
    <lineage>
        <taxon>Eukaryota</taxon>
        <taxon>Metazoa</taxon>
        <taxon>Chordata</taxon>
        <taxon>Craniata</taxon>
        <taxon>Vertebrata</taxon>
        <taxon>Euteleostomi</taxon>
        <taxon>Mammalia</taxon>
        <taxon>Eutheria</taxon>
        <taxon>Euarchontoglires</taxon>
        <taxon>Primates</taxon>
        <taxon>Haplorrhini</taxon>
        <taxon>Catarrhini</taxon>
        <taxon>Hominidae</taxon>
        <taxon>Homo</taxon>
    </lineage>
</organism>
<accession>Q8WUD4</accession>
<accession>Q8N8I4</accession>
<protein>
    <recommendedName>
        <fullName>Coiled-coil domain-containing protein 12</fullName>
    </recommendedName>
</protein>
<keyword id="KW-0002">3D-structure</keyword>
<keyword id="KW-0007">Acetylation</keyword>
<keyword id="KW-0175">Coiled coil</keyword>
<keyword id="KW-1017">Isopeptide bond</keyword>
<keyword id="KW-0597">Phosphoprotein</keyword>
<keyword id="KW-1267">Proteomics identification</keyword>
<keyword id="KW-1185">Reference proteome</keyword>
<keyword id="KW-0832">Ubl conjugation</keyword>
<gene>
    <name type="primary">CCDC12</name>
</gene>
<sequence>MEATTAGVGRLEEEALRRKERLKALREKTGRKDKEDGEPKTKHLREEEEEGEKHRELRLRNYVPEDEDLKKRRVPQAKPVAVEEKVKEQLEAAKPEPVIEEVDLANLAPRKPDWDLKRDVAKKLEKLKKRTQRAIAELIRERLKGQEDSLASAVDAATEQKTCDSD</sequence>
<name>CCD12_HUMAN</name>
<comment type="interaction">
    <interactant intactId="EBI-2557572">
        <id>Q8WUD4</id>
    </interactant>
    <interactant intactId="EBI-1047414">
        <id>Q9H1Y0</id>
        <label>ATG5</label>
    </interactant>
    <organismsDiffer>false</organismsDiffer>
    <experiments>7</experiments>
</comment>
<comment type="interaction">
    <interactant intactId="EBI-2557572">
        <id>Q8WUD4</id>
    </interactant>
    <interactant intactId="EBI-1049701">
        <id>Q9BZJ0</id>
        <label>CRNKL1</label>
    </interactant>
    <organismsDiffer>false</organismsDiffer>
    <experiments>4</experiments>
</comment>
<proteinExistence type="evidence at protein level"/>
<feature type="chain" id="PRO_0000076191" description="Coiled-coil domain-containing protein 12">
    <location>
        <begin position="1"/>
        <end position="166"/>
    </location>
</feature>
<feature type="region of interest" description="Disordered" evidence="3">
    <location>
        <begin position="1"/>
        <end position="56"/>
    </location>
</feature>
<feature type="region of interest" description="Disordered" evidence="3">
    <location>
        <begin position="147"/>
        <end position="166"/>
    </location>
</feature>
<feature type="coiled-coil region" evidence="2">
    <location>
        <begin position="8"/>
        <end position="28"/>
    </location>
</feature>
<feature type="coiled-coil region" evidence="2">
    <location>
        <begin position="117"/>
        <end position="144"/>
    </location>
</feature>
<feature type="compositionally biased region" description="Basic and acidic residues" evidence="3">
    <location>
        <begin position="10"/>
        <end position="56"/>
    </location>
</feature>
<feature type="modified residue" description="N-acetylmethionine" evidence="6 7">
    <location>
        <position position="1"/>
    </location>
</feature>
<feature type="modified residue" description="N6-acetyllysine" evidence="1">
    <location>
        <position position="53"/>
    </location>
</feature>
<feature type="modified residue" description="Phosphoserine" evidence="8">
    <location>
        <position position="149"/>
    </location>
</feature>
<feature type="modified residue" description="Phosphoserine" evidence="5">
    <location>
        <position position="165"/>
    </location>
</feature>
<feature type="cross-link" description="Glycyl lysine isopeptide (Lys-Gly) (interchain with G-Cter in SUMO2)" evidence="9">
    <location>
        <position position="94"/>
    </location>
</feature>
<feature type="sequence conflict" description="In Ref. 1; BAC04857." evidence="4" ref="1">
    <original>P</original>
    <variation>S</variation>
    <location>
        <position position="97"/>
    </location>
</feature>
<dbReference type="EMBL" id="AK096749">
    <property type="protein sequence ID" value="BAC04857.1"/>
    <property type="molecule type" value="mRNA"/>
</dbReference>
<dbReference type="EMBL" id="BC020830">
    <property type="protein sequence ID" value="AAH20830.1"/>
    <property type="molecule type" value="mRNA"/>
</dbReference>
<dbReference type="CCDS" id="CCDS2748.3"/>
<dbReference type="RefSeq" id="NP_001264003.1">
    <property type="nucleotide sequence ID" value="NM_001277074.2"/>
</dbReference>
<dbReference type="PDB" id="8RO2">
    <property type="method" value="EM"/>
    <property type="resolution" value="3.50 A"/>
    <property type="chains" value="Z=1-166"/>
</dbReference>
<dbReference type="PDB" id="9FMD">
    <property type="method" value="EM"/>
    <property type="resolution" value="3.30 A"/>
    <property type="chains" value="Z=1-166"/>
</dbReference>
<dbReference type="PDBsum" id="8RO2"/>
<dbReference type="PDBsum" id="9FMD"/>
<dbReference type="EMDB" id="EMD-19399"/>
<dbReference type="SMR" id="Q8WUD4"/>
<dbReference type="BioGRID" id="127412">
    <property type="interactions" value="132"/>
</dbReference>
<dbReference type="FunCoup" id="Q8WUD4">
    <property type="interactions" value="2479"/>
</dbReference>
<dbReference type="IntAct" id="Q8WUD4">
    <property type="interactions" value="82"/>
</dbReference>
<dbReference type="MINT" id="Q8WUD4"/>
<dbReference type="STRING" id="9606.ENSP00000292314"/>
<dbReference type="GlyGen" id="Q8WUD4">
    <property type="glycosylation" value="1 site, 1 O-linked glycan (1 site)"/>
</dbReference>
<dbReference type="iPTMnet" id="Q8WUD4"/>
<dbReference type="PhosphoSitePlus" id="Q8WUD4"/>
<dbReference type="BioMuta" id="CCDC12"/>
<dbReference type="DMDM" id="74730697"/>
<dbReference type="jPOST" id="Q8WUD4"/>
<dbReference type="MassIVE" id="Q8WUD4"/>
<dbReference type="PaxDb" id="9606-ENSP00000292314"/>
<dbReference type="PeptideAtlas" id="Q8WUD4"/>
<dbReference type="ProteomicsDB" id="74658"/>
<dbReference type="Pumba" id="Q8WUD4"/>
<dbReference type="Antibodypedia" id="58026">
    <property type="antibodies" value="108 antibodies from 17 providers"/>
</dbReference>
<dbReference type="DNASU" id="151903"/>
<dbReference type="Ensembl" id="ENST00000425441.5">
    <property type="protein sequence ID" value="ENSP00000416263.2"/>
    <property type="gene ID" value="ENSG00000160799.13"/>
</dbReference>
<dbReference type="Ensembl" id="ENST00000683445.1">
    <property type="protein sequence ID" value="ENSP00000508011.1"/>
    <property type="gene ID" value="ENSG00000160799.13"/>
</dbReference>
<dbReference type="GeneID" id="151903"/>
<dbReference type="KEGG" id="hsa:151903"/>
<dbReference type="MANE-Select" id="ENST00000683445.1">
    <property type="protein sequence ID" value="ENSP00000508011.1"/>
    <property type="RefSeq nucleotide sequence ID" value="NM_001277074.2"/>
    <property type="RefSeq protein sequence ID" value="NP_001264003.1"/>
</dbReference>
<dbReference type="UCSC" id="uc062jbe.1">
    <property type="organism name" value="human"/>
</dbReference>
<dbReference type="AGR" id="HGNC:28332"/>
<dbReference type="CTD" id="151903"/>
<dbReference type="DisGeNET" id="151903"/>
<dbReference type="GeneCards" id="CCDC12"/>
<dbReference type="HGNC" id="HGNC:28332">
    <property type="gene designation" value="CCDC12"/>
</dbReference>
<dbReference type="HPA" id="ENSG00000160799">
    <property type="expression patterns" value="Low tissue specificity"/>
</dbReference>
<dbReference type="neXtProt" id="NX_Q8WUD4"/>
<dbReference type="OpenTargets" id="ENSG00000160799"/>
<dbReference type="PharmGKB" id="PA134970849"/>
<dbReference type="VEuPathDB" id="HostDB:ENSG00000160799"/>
<dbReference type="eggNOG" id="KOG3407">
    <property type="taxonomic scope" value="Eukaryota"/>
</dbReference>
<dbReference type="GeneTree" id="ENSGT00390000011619"/>
<dbReference type="HOGENOM" id="CLU_091076_3_0_1"/>
<dbReference type="InParanoid" id="Q8WUD4"/>
<dbReference type="OrthoDB" id="10261348at2759"/>
<dbReference type="PAN-GO" id="Q8WUD4">
    <property type="GO annotations" value="2 GO annotations based on evolutionary models"/>
</dbReference>
<dbReference type="PhylomeDB" id="Q8WUD4"/>
<dbReference type="PathwayCommons" id="Q8WUD4"/>
<dbReference type="Reactome" id="R-HSA-72163">
    <property type="pathway name" value="mRNA Splicing - Major Pathway"/>
</dbReference>
<dbReference type="SignaLink" id="Q8WUD4"/>
<dbReference type="BioGRID-ORCS" id="151903">
    <property type="hits" value="248 hits in 1160 CRISPR screens"/>
</dbReference>
<dbReference type="ChiTaRS" id="CCDC12">
    <property type="organism name" value="human"/>
</dbReference>
<dbReference type="GenomeRNAi" id="151903"/>
<dbReference type="Pharos" id="Q8WUD4">
    <property type="development level" value="Tdark"/>
</dbReference>
<dbReference type="PRO" id="PR:Q8WUD4"/>
<dbReference type="Proteomes" id="UP000005640">
    <property type="component" value="Chromosome 3"/>
</dbReference>
<dbReference type="RNAct" id="Q8WUD4">
    <property type="molecule type" value="protein"/>
</dbReference>
<dbReference type="Bgee" id="ENSG00000160799">
    <property type="expression patterns" value="Expressed in sural nerve and 188 other cell types or tissues"/>
</dbReference>
<dbReference type="ExpressionAtlas" id="Q8WUD4">
    <property type="expression patterns" value="baseline and differential"/>
</dbReference>
<dbReference type="GO" id="GO:0005654">
    <property type="term" value="C:nucleoplasm"/>
    <property type="evidence" value="ECO:0000304"/>
    <property type="project" value="Reactome"/>
</dbReference>
<dbReference type="GO" id="GO:0071014">
    <property type="term" value="C:post-mRNA release spliceosomal complex"/>
    <property type="evidence" value="ECO:0000318"/>
    <property type="project" value="GO_Central"/>
</dbReference>
<dbReference type="GO" id="GO:0005684">
    <property type="term" value="C:U2-type spliceosomal complex"/>
    <property type="evidence" value="ECO:0000318"/>
    <property type="project" value="GO_Central"/>
</dbReference>
<dbReference type="InterPro" id="IPR013169">
    <property type="entry name" value="mRNA_splic_Cwf18-like"/>
</dbReference>
<dbReference type="PANTHER" id="PTHR31551:SF1">
    <property type="entry name" value="COILED-COIL DOMAIN-CONTAINING PROTEIN 12"/>
    <property type="match status" value="1"/>
</dbReference>
<dbReference type="PANTHER" id="PTHR31551">
    <property type="entry name" value="PRE-MRNA-SPLICING FACTOR CWF18"/>
    <property type="match status" value="1"/>
</dbReference>
<dbReference type="Pfam" id="PF08315">
    <property type="entry name" value="cwf18"/>
    <property type="match status" value="1"/>
</dbReference>
<evidence type="ECO:0000250" key="1">
    <source>
        <dbReference type="UniProtKB" id="Q8R344"/>
    </source>
</evidence>
<evidence type="ECO:0000255" key="2"/>
<evidence type="ECO:0000256" key="3">
    <source>
        <dbReference type="SAM" id="MobiDB-lite"/>
    </source>
</evidence>
<evidence type="ECO:0000305" key="4"/>
<evidence type="ECO:0007744" key="5">
    <source>
    </source>
</evidence>
<evidence type="ECO:0007744" key="6">
    <source>
    </source>
</evidence>
<evidence type="ECO:0007744" key="7">
    <source>
    </source>
</evidence>
<evidence type="ECO:0007744" key="8">
    <source>
    </source>
</evidence>
<evidence type="ECO:0007744" key="9">
    <source>
    </source>
</evidence>
<reference key="1">
    <citation type="journal article" date="2004" name="Nat. Genet.">
        <title>Complete sequencing and characterization of 21,243 full-length human cDNAs.</title>
        <authorList>
            <person name="Ota T."/>
            <person name="Suzuki Y."/>
            <person name="Nishikawa T."/>
            <person name="Otsuki T."/>
            <person name="Sugiyama T."/>
            <person name="Irie R."/>
            <person name="Wakamatsu A."/>
            <person name="Hayashi K."/>
            <person name="Sato H."/>
            <person name="Nagai K."/>
            <person name="Kimura K."/>
            <person name="Makita H."/>
            <person name="Sekine M."/>
            <person name="Obayashi M."/>
            <person name="Nishi T."/>
            <person name="Shibahara T."/>
            <person name="Tanaka T."/>
            <person name="Ishii S."/>
            <person name="Yamamoto J."/>
            <person name="Saito K."/>
            <person name="Kawai Y."/>
            <person name="Isono Y."/>
            <person name="Nakamura Y."/>
            <person name="Nagahari K."/>
            <person name="Murakami K."/>
            <person name="Yasuda T."/>
            <person name="Iwayanagi T."/>
            <person name="Wagatsuma M."/>
            <person name="Shiratori A."/>
            <person name="Sudo H."/>
            <person name="Hosoiri T."/>
            <person name="Kaku Y."/>
            <person name="Kodaira H."/>
            <person name="Kondo H."/>
            <person name="Sugawara M."/>
            <person name="Takahashi M."/>
            <person name="Kanda K."/>
            <person name="Yokoi T."/>
            <person name="Furuya T."/>
            <person name="Kikkawa E."/>
            <person name="Omura Y."/>
            <person name="Abe K."/>
            <person name="Kamihara K."/>
            <person name="Katsuta N."/>
            <person name="Sato K."/>
            <person name="Tanikawa M."/>
            <person name="Yamazaki M."/>
            <person name="Ninomiya K."/>
            <person name="Ishibashi T."/>
            <person name="Yamashita H."/>
            <person name="Murakawa K."/>
            <person name="Fujimori K."/>
            <person name="Tanai H."/>
            <person name="Kimata M."/>
            <person name="Watanabe M."/>
            <person name="Hiraoka S."/>
            <person name="Chiba Y."/>
            <person name="Ishida S."/>
            <person name="Ono Y."/>
            <person name="Takiguchi S."/>
            <person name="Watanabe S."/>
            <person name="Yosida M."/>
            <person name="Hotuta T."/>
            <person name="Kusano J."/>
            <person name="Kanehori K."/>
            <person name="Takahashi-Fujii A."/>
            <person name="Hara H."/>
            <person name="Tanase T.-O."/>
            <person name="Nomura Y."/>
            <person name="Togiya S."/>
            <person name="Komai F."/>
            <person name="Hara R."/>
            <person name="Takeuchi K."/>
            <person name="Arita M."/>
            <person name="Imose N."/>
            <person name="Musashino K."/>
            <person name="Yuuki H."/>
            <person name="Oshima A."/>
            <person name="Sasaki N."/>
            <person name="Aotsuka S."/>
            <person name="Yoshikawa Y."/>
            <person name="Matsunawa H."/>
            <person name="Ichihara T."/>
            <person name="Shiohata N."/>
            <person name="Sano S."/>
            <person name="Moriya S."/>
            <person name="Momiyama H."/>
            <person name="Satoh N."/>
            <person name="Takami S."/>
            <person name="Terashima Y."/>
            <person name="Suzuki O."/>
            <person name="Nakagawa S."/>
            <person name="Senoh A."/>
            <person name="Mizoguchi H."/>
            <person name="Goto Y."/>
            <person name="Shimizu F."/>
            <person name="Wakebe H."/>
            <person name="Hishigaki H."/>
            <person name="Watanabe T."/>
            <person name="Sugiyama A."/>
            <person name="Takemoto M."/>
            <person name="Kawakami B."/>
            <person name="Yamazaki M."/>
            <person name="Watanabe K."/>
            <person name="Kumagai A."/>
            <person name="Itakura S."/>
            <person name="Fukuzumi Y."/>
            <person name="Fujimori Y."/>
            <person name="Komiyama M."/>
            <person name="Tashiro H."/>
            <person name="Tanigami A."/>
            <person name="Fujiwara T."/>
            <person name="Ono T."/>
            <person name="Yamada K."/>
            <person name="Fujii Y."/>
            <person name="Ozaki K."/>
            <person name="Hirao M."/>
            <person name="Ohmori Y."/>
            <person name="Kawabata A."/>
            <person name="Hikiji T."/>
            <person name="Kobatake N."/>
            <person name="Inagaki H."/>
            <person name="Ikema Y."/>
            <person name="Okamoto S."/>
            <person name="Okitani R."/>
            <person name="Kawakami T."/>
            <person name="Noguchi S."/>
            <person name="Itoh T."/>
            <person name="Shigeta K."/>
            <person name="Senba T."/>
            <person name="Matsumura K."/>
            <person name="Nakajima Y."/>
            <person name="Mizuno T."/>
            <person name="Morinaga M."/>
            <person name="Sasaki M."/>
            <person name="Togashi T."/>
            <person name="Oyama M."/>
            <person name="Hata H."/>
            <person name="Watanabe M."/>
            <person name="Komatsu T."/>
            <person name="Mizushima-Sugano J."/>
            <person name="Satoh T."/>
            <person name="Shirai Y."/>
            <person name="Takahashi Y."/>
            <person name="Nakagawa K."/>
            <person name="Okumura K."/>
            <person name="Nagase T."/>
            <person name="Nomura N."/>
            <person name="Kikuchi H."/>
            <person name="Masuho Y."/>
            <person name="Yamashita R."/>
            <person name="Nakai K."/>
            <person name="Yada T."/>
            <person name="Nakamura Y."/>
            <person name="Ohara O."/>
            <person name="Isogai T."/>
            <person name="Sugano S."/>
        </authorList>
    </citation>
    <scope>NUCLEOTIDE SEQUENCE [LARGE SCALE MRNA]</scope>
    <source>
        <tissue>Prostate</tissue>
    </source>
</reference>
<reference key="2">
    <citation type="journal article" date="2004" name="Genome Res.">
        <title>The status, quality, and expansion of the NIH full-length cDNA project: the Mammalian Gene Collection (MGC).</title>
        <authorList>
            <consortium name="The MGC Project Team"/>
        </authorList>
    </citation>
    <scope>NUCLEOTIDE SEQUENCE [LARGE SCALE MRNA]</scope>
    <source>
        <tissue>Testis</tissue>
    </source>
</reference>
<reference key="3">
    <citation type="journal article" date="2008" name="Proc. Natl. Acad. Sci. U.S.A.">
        <title>A quantitative atlas of mitotic phosphorylation.</title>
        <authorList>
            <person name="Dephoure N."/>
            <person name="Zhou C."/>
            <person name="Villen J."/>
            <person name="Beausoleil S.A."/>
            <person name="Bakalarski C.E."/>
            <person name="Elledge S.J."/>
            <person name="Gygi S.P."/>
        </authorList>
    </citation>
    <scope>PHOSPHORYLATION [LARGE SCALE ANALYSIS] AT SER-165</scope>
    <scope>IDENTIFICATION BY MASS SPECTROMETRY [LARGE SCALE ANALYSIS]</scope>
    <source>
        <tissue>Cervix carcinoma</tissue>
    </source>
</reference>
<reference key="4">
    <citation type="journal article" date="2009" name="Anal. Chem.">
        <title>Lys-N and trypsin cover complementary parts of the phosphoproteome in a refined SCX-based approach.</title>
        <authorList>
            <person name="Gauci S."/>
            <person name="Helbig A.O."/>
            <person name="Slijper M."/>
            <person name="Krijgsveld J."/>
            <person name="Heck A.J."/>
            <person name="Mohammed S."/>
        </authorList>
    </citation>
    <scope>ACETYLATION [LARGE SCALE ANALYSIS] AT MET-1</scope>
    <scope>IDENTIFICATION BY MASS SPECTROMETRY [LARGE SCALE ANALYSIS]</scope>
</reference>
<reference key="5">
    <citation type="journal article" date="2011" name="BMC Syst. Biol.">
        <title>Initial characterization of the human central proteome.</title>
        <authorList>
            <person name="Burkard T.R."/>
            <person name="Planyavsky M."/>
            <person name="Kaupe I."/>
            <person name="Breitwieser F.P."/>
            <person name="Buerckstuemmer T."/>
            <person name="Bennett K.L."/>
            <person name="Superti-Furga G."/>
            <person name="Colinge J."/>
        </authorList>
    </citation>
    <scope>IDENTIFICATION BY MASS SPECTROMETRY [LARGE SCALE ANALYSIS]</scope>
</reference>
<reference key="6">
    <citation type="journal article" date="2012" name="Proc. Natl. Acad. Sci. U.S.A.">
        <title>N-terminal acetylome analyses and functional insights of the N-terminal acetyltransferase NatB.</title>
        <authorList>
            <person name="Van Damme P."/>
            <person name="Lasa M."/>
            <person name="Polevoda B."/>
            <person name="Gazquez C."/>
            <person name="Elosegui-Artola A."/>
            <person name="Kim D.S."/>
            <person name="De Juan-Pardo E."/>
            <person name="Demeyer K."/>
            <person name="Hole K."/>
            <person name="Larrea E."/>
            <person name="Timmerman E."/>
            <person name="Prieto J."/>
            <person name="Arnesen T."/>
            <person name="Sherman F."/>
            <person name="Gevaert K."/>
            <person name="Aldabe R."/>
        </authorList>
    </citation>
    <scope>ACETYLATION [LARGE SCALE ANALYSIS] AT MET-1</scope>
    <scope>IDENTIFICATION BY MASS SPECTROMETRY [LARGE SCALE ANALYSIS]</scope>
</reference>
<reference key="7">
    <citation type="journal article" date="2013" name="J. Proteome Res.">
        <title>Toward a comprehensive characterization of a human cancer cell phosphoproteome.</title>
        <authorList>
            <person name="Zhou H."/>
            <person name="Di Palma S."/>
            <person name="Preisinger C."/>
            <person name="Peng M."/>
            <person name="Polat A.N."/>
            <person name="Heck A.J."/>
            <person name="Mohammed S."/>
        </authorList>
    </citation>
    <scope>PHOSPHORYLATION [LARGE SCALE ANALYSIS] AT SER-149</scope>
    <scope>IDENTIFICATION BY MASS SPECTROMETRY [LARGE SCALE ANALYSIS]</scope>
    <source>
        <tissue>Erythroleukemia</tissue>
    </source>
</reference>
<reference key="8">
    <citation type="journal article" date="2014" name="J. Proteomics">
        <title>An enzyme assisted RP-RPLC approach for in-depth analysis of human liver phosphoproteome.</title>
        <authorList>
            <person name="Bian Y."/>
            <person name="Song C."/>
            <person name="Cheng K."/>
            <person name="Dong M."/>
            <person name="Wang F."/>
            <person name="Huang J."/>
            <person name="Sun D."/>
            <person name="Wang L."/>
            <person name="Ye M."/>
            <person name="Zou H."/>
        </authorList>
    </citation>
    <scope>IDENTIFICATION BY MASS SPECTROMETRY [LARGE SCALE ANALYSIS]</scope>
    <source>
        <tissue>Liver</tissue>
    </source>
</reference>
<reference key="9">
    <citation type="journal article" date="2017" name="Nat. Struct. Mol. Biol.">
        <title>Site-specific mapping of the human SUMO proteome reveals co-modification with phosphorylation.</title>
        <authorList>
            <person name="Hendriks I.A."/>
            <person name="Lyon D."/>
            <person name="Young C."/>
            <person name="Jensen L.J."/>
            <person name="Vertegaal A.C."/>
            <person name="Nielsen M.L."/>
        </authorList>
    </citation>
    <scope>SUMOYLATION [LARGE SCALE ANALYSIS] AT LYS-94</scope>
    <scope>IDENTIFICATION BY MASS SPECTROMETRY [LARGE SCALE ANALYSIS]</scope>
</reference>